<keyword id="KW-0025">Alternative splicing</keyword>
<keyword id="KW-0963">Cytoplasm</keyword>
<keyword id="KW-0206">Cytoskeleton</keyword>
<keyword id="KW-0254">Endocytosis</keyword>
<keyword id="KW-0342">GTP-binding</keyword>
<keyword id="KW-0378">Hydrolase</keyword>
<keyword id="KW-0493">Microtubule</keyword>
<keyword id="KW-0505">Motor protein</keyword>
<keyword id="KW-0547">Nucleotide-binding</keyword>
<keyword id="KW-0597">Phosphoprotein</keyword>
<keyword id="KW-1185">Reference proteome</keyword>
<protein>
    <recommendedName>
        <fullName>Dynamin</fullName>
        <ecNumber>3.6.5.5</ecNumber>
    </recommendedName>
    <alternativeName>
        <fullName>Protein shibire</fullName>
    </alternativeName>
    <alternativeName>
        <fullName>dDyn</fullName>
    </alternativeName>
</protein>
<feature type="chain" id="PRO_0000206576" description="Dynamin">
    <location>
        <begin position="1"/>
        <end position="877"/>
    </location>
</feature>
<feature type="domain" description="Dynamin-type G" evidence="4">
    <location>
        <begin position="23"/>
        <end position="289"/>
    </location>
</feature>
<feature type="domain" description="PH" evidence="2">
    <location>
        <begin position="513"/>
        <end position="621"/>
    </location>
</feature>
<feature type="domain" description="GED" evidence="3">
    <location>
        <begin position="650"/>
        <end position="741"/>
    </location>
</feature>
<feature type="region of interest" description="G1 motif" evidence="4">
    <location>
        <begin position="33"/>
        <end position="40"/>
    </location>
</feature>
<feature type="region of interest" description="G2 motif" evidence="4">
    <location>
        <begin position="59"/>
        <end position="61"/>
    </location>
</feature>
<feature type="region of interest" description="G3 motif" evidence="4">
    <location>
        <begin position="131"/>
        <end position="134"/>
    </location>
</feature>
<feature type="region of interest" description="G4 motif" evidence="4">
    <location>
        <begin position="200"/>
        <end position="203"/>
    </location>
</feature>
<feature type="region of interest" description="G5 motif" evidence="4">
    <location>
        <begin position="230"/>
        <end position="233"/>
    </location>
</feature>
<feature type="region of interest" description="Disordered" evidence="5">
    <location>
        <begin position="623"/>
        <end position="648"/>
    </location>
</feature>
<feature type="region of interest" description="Disordered" evidence="5">
    <location>
        <begin position="740"/>
        <end position="834"/>
    </location>
</feature>
<feature type="compositionally biased region" description="Acidic residues" evidence="5">
    <location>
        <begin position="630"/>
        <end position="641"/>
    </location>
</feature>
<feature type="compositionally biased region" description="Pro residues" evidence="5">
    <location>
        <begin position="788"/>
        <end position="826"/>
    </location>
</feature>
<feature type="binding site" evidence="1">
    <location>
        <begin position="33"/>
        <end position="41"/>
    </location>
    <ligand>
        <name>GTP</name>
        <dbReference type="ChEBI" id="CHEBI:37565"/>
    </ligand>
</feature>
<feature type="binding site" evidence="1">
    <location>
        <begin position="200"/>
        <end position="206"/>
    </location>
    <ligand>
        <name>GTP</name>
        <dbReference type="ChEBI" id="CHEBI:37565"/>
    </ligand>
</feature>
<feature type="binding site" evidence="1">
    <location>
        <begin position="231"/>
        <end position="234"/>
    </location>
    <ligand>
        <name>GTP</name>
        <dbReference type="ChEBI" id="CHEBI:37565"/>
    </ligand>
</feature>
<feature type="modified residue" description="Phosphoserine" evidence="7">
    <location>
        <position position="756"/>
    </location>
</feature>
<feature type="modified residue" description="Phosphoserine" evidence="7">
    <location>
        <position position="764"/>
    </location>
</feature>
<feature type="modified residue" description="Phosphoserine" evidence="7">
    <location>
        <position position="767"/>
    </location>
</feature>
<feature type="splice variant" id="VSP_001330" description="In isoform 2." evidence="8 9">
    <original>V</original>
    <variation>R</variation>
    <location>
        <position position="830"/>
    </location>
</feature>
<feature type="splice variant" id="VSP_001331" description="In isoform 2." evidence="8 9">
    <location>
        <begin position="831"/>
        <end position="877"/>
    </location>
</feature>
<feature type="mutagenesis site" description="In allele shi-TS2; temperature sensitive larval and adult paralysis." evidence="6">
    <original>G</original>
    <variation>S</variation>
    <location>
        <position position="141"/>
    </location>
</feature>
<feature type="mutagenesis site" description="In allele shi-TS1; temperature sensitive larval and adult paralysis." evidence="6">
    <original>G</original>
    <variation>D</variation>
    <location>
        <position position="268"/>
    </location>
</feature>
<feature type="sequence conflict" description="In Ref. 1; CAA42067/CAA42068." evidence="10" ref="1">
    <original>K</original>
    <variation>R</variation>
    <location>
        <position position="594"/>
    </location>
</feature>
<accession>P27619</accession>
<accession>Q0KHS4</accession>
<accession>Q9VXM2</accession>
<comment type="function">
    <text>Microtubule-associated force-producing protein which is involved in the production of microtubule bundles and which is able to bind and hydrolyze GTP. Implicated in endocytic protein sorting.</text>
</comment>
<comment type="catalytic activity">
    <reaction>
        <text>GTP + H2O = GDP + phosphate + H(+)</text>
        <dbReference type="Rhea" id="RHEA:19669"/>
        <dbReference type="ChEBI" id="CHEBI:15377"/>
        <dbReference type="ChEBI" id="CHEBI:15378"/>
        <dbReference type="ChEBI" id="CHEBI:37565"/>
        <dbReference type="ChEBI" id="CHEBI:43474"/>
        <dbReference type="ChEBI" id="CHEBI:58189"/>
        <dbReference type="EC" id="3.6.5.5"/>
    </reaction>
</comment>
<comment type="subcellular location">
    <subcellularLocation>
        <location>Cytoplasm</location>
    </subcellularLocation>
    <subcellularLocation>
        <location>Cytoplasm</location>
        <location>Cytoskeleton</location>
    </subcellularLocation>
    <text>Microtubule-associated.</text>
</comment>
<comment type="alternative products">
    <event type="alternative splicing"/>
    <isoform>
        <id>P27619-1</id>
        <name>1</name>
        <name>4</name>
        <name>D</name>
        <name>F</name>
        <sequence type="displayed"/>
    </isoform>
    <isoform>
        <id>P27619-2</id>
        <name>2</name>
        <name>3</name>
        <name>A</name>
        <name>B</name>
        <sequence type="described" ref="VSP_001330 VSP_001331"/>
    </isoform>
</comment>
<comment type="miscellaneous">
    <text>Shibire mutation is the cause of temperature-sensitive paralysis. This is believed to be due to a reversible block of endocytosis, which prevents membrane cycling and thus depletes synaptic vesicles.</text>
</comment>
<comment type="miscellaneous">
    <text>'Shibire' means 'paralyzed' in Japanese.</text>
</comment>
<comment type="similarity">
    <text evidence="4">Belongs to the TRAFAC class dynamin-like GTPase superfamily. Dynamin/Fzo/YdjA family.</text>
</comment>
<comment type="sequence caution" evidence="10">
    <conflict type="miscellaneous discrepancy">
        <sequence resource="EMBL-CDS" id="CAA42061"/>
    </conflict>
    <text>Chimeric cDNA. There is a 6 amino acid insertion at position 634 due to a chimera of DNA from chromosome arms X and 3L.</text>
</comment>
<comment type="sequence caution" evidence="10">
    <conflict type="miscellaneous discrepancy">
        <sequence resource="EMBL-CDS" id="CAA42067"/>
    </conflict>
    <text>Chimeric cDNA. There is a 6 amino acid insertion at position 634 due to a chimera of DNA from chromosome arms X and 3L.</text>
</comment>
<comment type="sequence caution" evidence="10">
    <conflict type="miscellaneous discrepancy">
        <sequence resource="EMBL-CDS" id="CAA42068"/>
    </conflict>
    <text>Chimeric cDNA. There is a 6 amino acid insertion at position 634 due to a chimera of DNA from chromosome arms X and 3L.</text>
</comment>
<name>DYN_DROME</name>
<proteinExistence type="evidence at protein level"/>
<organism>
    <name type="scientific">Drosophila melanogaster</name>
    <name type="common">Fruit fly</name>
    <dbReference type="NCBI Taxonomy" id="7227"/>
    <lineage>
        <taxon>Eukaryota</taxon>
        <taxon>Metazoa</taxon>
        <taxon>Ecdysozoa</taxon>
        <taxon>Arthropoda</taxon>
        <taxon>Hexapoda</taxon>
        <taxon>Insecta</taxon>
        <taxon>Pterygota</taxon>
        <taxon>Neoptera</taxon>
        <taxon>Endopterygota</taxon>
        <taxon>Diptera</taxon>
        <taxon>Brachycera</taxon>
        <taxon>Muscomorpha</taxon>
        <taxon>Ephydroidea</taxon>
        <taxon>Drosophilidae</taxon>
        <taxon>Drosophila</taxon>
        <taxon>Sophophora</taxon>
    </lineage>
</organism>
<reference key="1">
    <citation type="journal article" date="1991" name="Nature">
        <title>Multiple forms of dynamin are encoded by shibire, a Drosophila gene involved in endocytosis.</title>
        <authorList>
            <person name="Chen M.S."/>
            <person name="Obar R.A."/>
            <person name="Schroeder C.C."/>
            <person name="Austin T.W."/>
            <person name="Poodry C.A."/>
            <person name="Wadsworth S.C."/>
            <person name="Vallee R.B."/>
        </authorList>
    </citation>
    <scope>NUCLEOTIDE SEQUENCE [MRNA] (ISOFORMS 1 AND 2)</scope>
    <source>
        <strain>Canton-S</strain>
        <tissue>Head</tissue>
    </source>
</reference>
<reference key="2">
    <citation type="journal article" date="1991" name="Nature">
        <title>Dynamin-like protein encoded by the Drosophila shibire gene associated with vesicular traffic.</title>
        <authorList>
            <person name="van der Bliek A.M."/>
            <person name="Meyerowitz E.M."/>
        </authorList>
    </citation>
    <scope>NUCLEOTIDE SEQUENCE [MRNA] (ISOFORMS 1 AND 2)</scope>
    <scope>MUTAGENESIS OF GLY-141 AND GLY-268</scope>
    <source>
        <strain>Oregon-R</strain>
    </source>
</reference>
<reference key="3">
    <citation type="journal article" date="2000" name="Science">
        <title>The genome sequence of Drosophila melanogaster.</title>
        <authorList>
            <person name="Adams M.D."/>
            <person name="Celniker S.E."/>
            <person name="Holt R.A."/>
            <person name="Evans C.A."/>
            <person name="Gocayne J.D."/>
            <person name="Amanatides P.G."/>
            <person name="Scherer S.E."/>
            <person name="Li P.W."/>
            <person name="Hoskins R.A."/>
            <person name="Galle R.F."/>
            <person name="George R.A."/>
            <person name="Lewis S.E."/>
            <person name="Richards S."/>
            <person name="Ashburner M."/>
            <person name="Henderson S.N."/>
            <person name="Sutton G.G."/>
            <person name="Wortman J.R."/>
            <person name="Yandell M.D."/>
            <person name="Zhang Q."/>
            <person name="Chen L.X."/>
            <person name="Brandon R.C."/>
            <person name="Rogers Y.-H.C."/>
            <person name="Blazej R.G."/>
            <person name="Champe M."/>
            <person name="Pfeiffer B.D."/>
            <person name="Wan K.H."/>
            <person name="Doyle C."/>
            <person name="Baxter E.G."/>
            <person name="Helt G."/>
            <person name="Nelson C.R."/>
            <person name="Miklos G.L.G."/>
            <person name="Abril J.F."/>
            <person name="Agbayani A."/>
            <person name="An H.-J."/>
            <person name="Andrews-Pfannkoch C."/>
            <person name="Baldwin D."/>
            <person name="Ballew R.M."/>
            <person name="Basu A."/>
            <person name="Baxendale J."/>
            <person name="Bayraktaroglu L."/>
            <person name="Beasley E.M."/>
            <person name="Beeson K.Y."/>
            <person name="Benos P.V."/>
            <person name="Berman B.P."/>
            <person name="Bhandari D."/>
            <person name="Bolshakov S."/>
            <person name="Borkova D."/>
            <person name="Botchan M.R."/>
            <person name="Bouck J."/>
            <person name="Brokstein P."/>
            <person name="Brottier P."/>
            <person name="Burtis K.C."/>
            <person name="Busam D.A."/>
            <person name="Butler H."/>
            <person name="Cadieu E."/>
            <person name="Center A."/>
            <person name="Chandra I."/>
            <person name="Cherry J.M."/>
            <person name="Cawley S."/>
            <person name="Dahlke C."/>
            <person name="Davenport L.B."/>
            <person name="Davies P."/>
            <person name="de Pablos B."/>
            <person name="Delcher A."/>
            <person name="Deng Z."/>
            <person name="Mays A.D."/>
            <person name="Dew I."/>
            <person name="Dietz S.M."/>
            <person name="Dodson K."/>
            <person name="Doup L.E."/>
            <person name="Downes M."/>
            <person name="Dugan-Rocha S."/>
            <person name="Dunkov B.C."/>
            <person name="Dunn P."/>
            <person name="Durbin K.J."/>
            <person name="Evangelista C.C."/>
            <person name="Ferraz C."/>
            <person name="Ferriera S."/>
            <person name="Fleischmann W."/>
            <person name="Fosler C."/>
            <person name="Gabrielian A.E."/>
            <person name="Garg N.S."/>
            <person name="Gelbart W.M."/>
            <person name="Glasser K."/>
            <person name="Glodek A."/>
            <person name="Gong F."/>
            <person name="Gorrell J.H."/>
            <person name="Gu Z."/>
            <person name="Guan P."/>
            <person name="Harris M."/>
            <person name="Harris N.L."/>
            <person name="Harvey D.A."/>
            <person name="Heiman T.J."/>
            <person name="Hernandez J.R."/>
            <person name="Houck J."/>
            <person name="Hostin D."/>
            <person name="Houston K.A."/>
            <person name="Howland T.J."/>
            <person name="Wei M.-H."/>
            <person name="Ibegwam C."/>
            <person name="Jalali M."/>
            <person name="Kalush F."/>
            <person name="Karpen G.H."/>
            <person name="Ke Z."/>
            <person name="Kennison J.A."/>
            <person name="Ketchum K.A."/>
            <person name="Kimmel B.E."/>
            <person name="Kodira C.D."/>
            <person name="Kraft C.L."/>
            <person name="Kravitz S."/>
            <person name="Kulp D."/>
            <person name="Lai Z."/>
            <person name="Lasko P."/>
            <person name="Lei Y."/>
            <person name="Levitsky A.A."/>
            <person name="Li J.H."/>
            <person name="Li Z."/>
            <person name="Liang Y."/>
            <person name="Lin X."/>
            <person name="Liu X."/>
            <person name="Mattei B."/>
            <person name="McIntosh T.C."/>
            <person name="McLeod M.P."/>
            <person name="McPherson D."/>
            <person name="Merkulov G."/>
            <person name="Milshina N.V."/>
            <person name="Mobarry C."/>
            <person name="Morris J."/>
            <person name="Moshrefi A."/>
            <person name="Mount S.M."/>
            <person name="Moy M."/>
            <person name="Murphy B."/>
            <person name="Murphy L."/>
            <person name="Muzny D.M."/>
            <person name="Nelson D.L."/>
            <person name="Nelson D.R."/>
            <person name="Nelson K.A."/>
            <person name="Nixon K."/>
            <person name="Nusskern D.R."/>
            <person name="Pacleb J.M."/>
            <person name="Palazzolo M."/>
            <person name="Pittman G.S."/>
            <person name="Pan S."/>
            <person name="Pollard J."/>
            <person name="Puri V."/>
            <person name="Reese M.G."/>
            <person name="Reinert K."/>
            <person name="Remington K."/>
            <person name="Saunders R.D.C."/>
            <person name="Scheeler F."/>
            <person name="Shen H."/>
            <person name="Shue B.C."/>
            <person name="Siden-Kiamos I."/>
            <person name="Simpson M."/>
            <person name="Skupski M.P."/>
            <person name="Smith T.J."/>
            <person name="Spier E."/>
            <person name="Spradling A.C."/>
            <person name="Stapleton M."/>
            <person name="Strong R."/>
            <person name="Sun E."/>
            <person name="Svirskas R."/>
            <person name="Tector C."/>
            <person name="Turner R."/>
            <person name="Venter E."/>
            <person name="Wang A.H."/>
            <person name="Wang X."/>
            <person name="Wang Z.-Y."/>
            <person name="Wassarman D.A."/>
            <person name="Weinstock G.M."/>
            <person name="Weissenbach J."/>
            <person name="Williams S.M."/>
            <person name="Woodage T."/>
            <person name="Worley K.C."/>
            <person name="Wu D."/>
            <person name="Yang S."/>
            <person name="Yao Q.A."/>
            <person name="Ye J."/>
            <person name="Yeh R.-F."/>
            <person name="Zaveri J.S."/>
            <person name="Zhan M."/>
            <person name="Zhang G."/>
            <person name="Zhao Q."/>
            <person name="Zheng L."/>
            <person name="Zheng X.H."/>
            <person name="Zhong F.N."/>
            <person name="Zhong W."/>
            <person name="Zhou X."/>
            <person name="Zhu S.C."/>
            <person name="Zhu X."/>
            <person name="Smith H.O."/>
            <person name="Gibbs R.A."/>
            <person name="Myers E.W."/>
            <person name="Rubin G.M."/>
            <person name="Venter J.C."/>
        </authorList>
    </citation>
    <scope>NUCLEOTIDE SEQUENCE [LARGE SCALE GENOMIC DNA]</scope>
    <source>
        <strain>Berkeley</strain>
    </source>
</reference>
<reference key="4">
    <citation type="journal article" date="2002" name="Genome Biol.">
        <title>Annotation of the Drosophila melanogaster euchromatic genome: a systematic review.</title>
        <authorList>
            <person name="Misra S."/>
            <person name="Crosby M.A."/>
            <person name="Mungall C.J."/>
            <person name="Matthews B.B."/>
            <person name="Campbell K.S."/>
            <person name="Hradecky P."/>
            <person name="Huang Y."/>
            <person name="Kaminker J.S."/>
            <person name="Millburn G.H."/>
            <person name="Prochnik S.E."/>
            <person name="Smith C.D."/>
            <person name="Tupy J.L."/>
            <person name="Whitfield E.J."/>
            <person name="Bayraktaroglu L."/>
            <person name="Berman B.P."/>
            <person name="Bettencourt B.R."/>
            <person name="Celniker S.E."/>
            <person name="de Grey A.D.N.J."/>
            <person name="Drysdale R.A."/>
            <person name="Harris N.L."/>
            <person name="Richter J."/>
            <person name="Russo S."/>
            <person name="Schroeder A.J."/>
            <person name="Shu S.Q."/>
            <person name="Stapleton M."/>
            <person name="Yamada C."/>
            <person name="Ashburner M."/>
            <person name="Gelbart W.M."/>
            <person name="Rubin G.M."/>
            <person name="Lewis S.E."/>
        </authorList>
    </citation>
    <scope>GENOME REANNOTATION</scope>
    <scope>ALTERNATIVE SPLICING</scope>
    <source>
        <strain>Berkeley</strain>
    </source>
</reference>
<reference key="5">
    <citation type="submission" date="2003-08" db="EMBL/GenBank/DDBJ databases">
        <authorList>
            <person name="Stapleton M."/>
            <person name="Brokstein P."/>
            <person name="Hong L."/>
            <person name="Agbayani A."/>
            <person name="Carlson J.W."/>
            <person name="Champe M."/>
            <person name="Chavez C."/>
            <person name="Dorsett V."/>
            <person name="Dresnek D."/>
            <person name="Farfan D."/>
            <person name="Frise E."/>
            <person name="George R.A."/>
            <person name="Gonzalez M."/>
            <person name="Guarin H."/>
            <person name="Kronmiller B."/>
            <person name="Li P.W."/>
            <person name="Liao G."/>
            <person name="Miranda A."/>
            <person name="Mungall C.J."/>
            <person name="Nunoo J."/>
            <person name="Pacleb J.M."/>
            <person name="Paragas V."/>
            <person name="Park S."/>
            <person name="Patel S."/>
            <person name="Phouanenavong S."/>
            <person name="Wan K.H."/>
            <person name="Yu C."/>
            <person name="Lewis S.E."/>
            <person name="Rubin G.M."/>
            <person name="Celniker S.E."/>
        </authorList>
    </citation>
    <scope>NUCLEOTIDE SEQUENCE [LARGE SCALE MRNA] (ISOFORM 1)</scope>
    <source>
        <strain>Berkeley</strain>
        <tissue>Embryo</tissue>
    </source>
</reference>
<reference key="6">
    <citation type="journal article" date="2008" name="J. Proteome Res.">
        <title>Phosphoproteome analysis of Drosophila melanogaster embryos.</title>
        <authorList>
            <person name="Zhai B."/>
            <person name="Villen J."/>
            <person name="Beausoleil S.A."/>
            <person name="Mintseris J."/>
            <person name="Gygi S.P."/>
        </authorList>
    </citation>
    <scope>PHOSPHORYLATION [LARGE SCALE ANALYSIS] AT SER-756; SER-764 AND SER-767</scope>
    <scope>IDENTIFICATION BY MASS SPECTROMETRY</scope>
    <source>
        <tissue>Embryo</tissue>
    </source>
</reference>
<dbReference type="EC" id="3.6.5.5"/>
<dbReference type="EMBL" id="X59448">
    <property type="protein sequence ID" value="CAA42067.1"/>
    <property type="status" value="ALT_SEQ"/>
    <property type="molecule type" value="mRNA"/>
</dbReference>
<dbReference type="EMBL" id="X59449">
    <property type="protein sequence ID" value="CAA42068.1"/>
    <property type="status" value="ALT_SEQ"/>
    <property type="molecule type" value="mRNA"/>
</dbReference>
<dbReference type="EMBL" id="X59435">
    <property type="protein sequence ID" value="CAA42061.1"/>
    <property type="status" value="ALT_SEQ"/>
    <property type="molecule type" value="mRNA"/>
</dbReference>
<dbReference type="EMBL" id="X59436">
    <property type="protein sequence ID" value="CAA42062.1"/>
    <property type="molecule type" value="mRNA"/>
</dbReference>
<dbReference type="EMBL" id="AE014298">
    <property type="protein sequence ID" value="AAF48536.2"/>
    <property type="molecule type" value="Genomic_DNA"/>
</dbReference>
<dbReference type="EMBL" id="AE014298">
    <property type="protein sequence ID" value="AAS65368.1"/>
    <property type="molecule type" value="Genomic_DNA"/>
</dbReference>
<dbReference type="EMBL" id="BT010049">
    <property type="protein sequence ID" value="AAQ22518.1"/>
    <property type="molecule type" value="mRNA"/>
</dbReference>
<dbReference type="PIR" id="S15413">
    <property type="entry name" value="S15413"/>
</dbReference>
<dbReference type="PIR" id="S16130">
    <property type="entry name" value="S16130"/>
</dbReference>
<dbReference type="PIR" id="S17974">
    <property type="entry name" value="S17974"/>
</dbReference>
<dbReference type="PIR" id="S17975">
    <property type="entry name" value="S17975"/>
</dbReference>
<dbReference type="PIR" id="S34399">
    <property type="entry name" value="S34399"/>
</dbReference>
<dbReference type="RefSeq" id="NP_001036278.1">
    <molecule id="P27619-2"/>
    <property type="nucleotide sequence ID" value="NM_001042813.2"/>
</dbReference>
<dbReference type="RefSeq" id="NP_001036279.1">
    <molecule id="P27619-2"/>
    <property type="nucleotide sequence ID" value="NM_001042814.2"/>
</dbReference>
<dbReference type="RefSeq" id="NP_001162766.1">
    <molecule id="P27619-1"/>
    <property type="nucleotide sequence ID" value="NM_001169295.1"/>
</dbReference>
<dbReference type="RefSeq" id="NP_001162768.1">
    <property type="nucleotide sequence ID" value="NM_001169297.2"/>
</dbReference>
<dbReference type="RefSeq" id="NP_524853.2">
    <molecule id="P27619-2"/>
    <property type="nucleotide sequence ID" value="NM_080114.4"/>
</dbReference>
<dbReference type="RefSeq" id="NP_727910.1">
    <molecule id="P27619-1"/>
    <property type="nucleotide sequence ID" value="NM_167470.3"/>
</dbReference>
<dbReference type="RefSeq" id="NP_727911.1">
    <molecule id="P27619-2"/>
    <property type="nucleotide sequence ID" value="NM_167471.5"/>
</dbReference>
<dbReference type="RefSeq" id="NP_996465.1">
    <molecule id="P27619-1"/>
    <property type="nucleotide sequence ID" value="NM_206742.1"/>
</dbReference>
<dbReference type="RefSeq" id="NP_996466.1">
    <molecule id="P27619-1"/>
    <property type="nucleotide sequence ID" value="NM_206743.2"/>
</dbReference>
<dbReference type="RefSeq" id="NP_996467.1">
    <molecule id="P27619-2"/>
    <property type="nucleotide sequence ID" value="NM_206744.3"/>
</dbReference>
<dbReference type="RefSeq" id="NP_996468.1">
    <molecule id="P27619-2"/>
    <property type="nucleotide sequence ID" value="NM_206745.3"/>
</dbReference>
<dbReference type="SMR" id="P27619"/>
<dbReference type="BioGRID" id="69991">
    <property type="interactions" value="60"/>
</dbReference>
<dbReference type="DIP" id="DIP-17621N"/>
<dbReference type="FunCoup" id="P27619">
    <property type="interactions" value="1031"/>
</dbReference>
<dbReference type="IntAct" id="P27619">
    <property type="interactions" value="4"/>
</dbReference>
<dbReference type="STRING" id="7227.FBpp0305866"/>
<dbReference type="GlyGen" id="P27619">
    <property type="glycosylation" value="1 site"/>
</dbReference>
<dbReference type="iPTMnet" id="P27619"/>
<dbReference type="PaxDb" id="7227-FBpp0305866"/>
<dbReference type="EnsemblMetazoa" id="FBtr0074118">
    <molecule id="P27619-2"/>
    <property type="protein sequence ID" value="FBpp0073928"/>
    <property type="gene ID" value="FBgn0003392"/>
</dbReference>
<dbReference type="EnsemblMetazoa" id="FBtr0074119">
    <molecule id="P27619-2"/>
    <property type="protein sequence ID" value="FBpp0073929"/>
    <property type="gene ID" value="FBgn0003392"/>
</dbReference>
<dbReference type="EnsemblMetazoa" id="FBtr0074121">
    <molecule id="P27619-2"/>
    <property type="protein sequence ID" value="FBpp0089278"/>
    <property type="gene ID" value="FBgn0003392"/>
</dbReference>
<dbReference type="EnsemblMetazoa" id="FBtr0074122">
    <molecule id="P27619-2"/>
    <property type="protein sequence ID" value="FBpp0089279"/>
    <property type="gene ID" value="FBgn0003392"/>
</dbReference>
<dbReference type="EnsemblMetazoa" id="FBtr0074123">
    <molecule id="P27619-1"/>
    <property type="protein sequence ID" value="FBpp0089280"/>
    <property type="gene ID" value="FBgn0003392"/>
</dbReference>
<dbReference type="EnsemblMetazoa" id="FBtr0074124">
    <molecule id="P27619-1"/>
    <property type="protein sequence ID" value="FBpp0089277"/>
    <property type="gene ID" value="FBgn0003392"/>
</dbReference>
<dbReference type="EnsemblMetazoa" id="FBtr0111036">
    <molecule id="P27619-2"/>
    <property type="protein sequence ID" value="FBpp0110335"/>
    <property type="gene ID" value="FBgn0003392"/>
</dbReference>
<dbReference type="EnsemblMetazoa" id="FBtr0111037">
    <molecule id="P27619-2"/>
    <property type="protein sequence ID" value="FBpp0110336"/>
    <property type="gene ID" value="FBgn0003392"/>
</dbReference>
<dbReference type="EnsemblMetazoa" id="FBtr0301594">
    <molecule id="P27619-1"/>
    <property type="protein sequence ID" value="FBpp0290809"/>
    <property type="gene ID" value="FBgn0003392"/>
</dbReference>
<dbReference type="EnsemblMetazoa" id="FBtr0301595">
    <molecule id="P27619-1"/>
    <property type="protein sequence ID" value="FBpp0290810"/>
    <property type="gene ID" value="FBgn0003392"/>
</dbReference>
<dbReference type="GeneID" id="45928"/>
<dbReference type="KEGG" id="dme:Dmel_CG18102"/>
<dbReference type="UCSC" id="CG18102-RA">
    <molecule id="P27619-1"/>
    <property type="organism name" value="d. melanogaster"/>
</dbReference>
<dbReference type="AGR" id="FB:FBgn0003392"/>
<dbReference type="CTD" id="45928"/>
<dbReference type="FlyBase" id="FBgn0003392">
    <property type="gene designation" value="shi"/>
</dbReference>
<dbReference type="VEuPathDB" id="VectorBase:FBgn0003392"/>
<dbReference type="eggNOG" id="KOG0446">
    <property type="taxonomic scope" value="Eukaryota"/>
</dbReference>
<dbReference type="GeneTree" id="ENSGT00940000166903"/>
<dbReference type="InParanoid" id="P27619"/>
<dbReference type="OrthoDB" id="5061070at2759"/>
<dbReference type="PhylomeDB" id="P27619"/>
<dbReference type="BRENDA" id="3.6.5.5">
    <property type="organism ID" value="1994"/>
</dbReference>
<dbReference type="Reactome" id="R-DME-190873">
    <property type="pathway name" value="Gap junction degradation"/>
</dbReference>
<dbReference type="Reactome" id="R-DME-196025">
    <property type="pathway name" value="Formation of annular gap junctions"/>
</dbReference>
<dbReference type="Reactome" id="R-DME-3928665">
    <property type="pathway name" value="EPH-ephrin mediated repulsion of cells"/>
</dbReference>
<dbReference type="Reactome" id="R-DME-432720">
    <property type="pathway name" value="Lysosome Vesicle Biogenesis"/>
</dbReference>
<dbReference type="Reactome" id="R-DME-432722">
    <property type="pathway name" value="Golgi Associated Vesicle Biogenesis"/>
</dbReference>
<dbReference type="Reactome" id="R-DME-437239">
    <property type="pathway name" value="Recycling pathway of L1"/>
</dbReference>
<dbReference type="Reactome" id="R-DME-8856828">
    <property type="pathway name" value="Clathrin-mediated endocytosis"/>
</dbReference>
<dbReference type="SignaLink" id="P27619"/>
<dbReference type="BioGRID-ORCS" id="45928">
    <property type="hits" value="3 hits in 3 CRISPR screens"/>
</dbReference>
<dbReference type="ChiTaRS" id="shi">
    <property type="organism name" value="fly"/>
</dbReference>
<dbReference type="GenomeRNAi" id="45928"/>
<dbReference type="PRO" id="PR:P27619"/>
<dbReference type="Proteomes" id="UP000000803">
    <property type="component" value="Chromosome X"/>
</dbReference>
<dbReference type="Bgee" id="FBgn0003392">
    <property type="expression patterns" value="Expressed in distal medullary amacrine neuron Dm9 in brain and 295 other cell types or tissues"/>
</dbReference>
<dbReference type="ExpressionAtlas" id="P27619">
    <property type="expression patterns" value="baseline and differential"/>
</dbReference>
<dbReference type="GO" id="GO:0005737">
    <property type="term" value="C:cytoplasm"/>
    <property type="evidence" value="ECO:0000314"/>
    <property type="project" value="FlyBase"/>
</dbReference>
<dbReference type="GO" id="GO:0005874">
    <property type="term" value="C:microtubule"/>
    <property type="evidence" value="ECO:0000318"/>
    <property type="project" value="GO_Central"/>
</dbReference>
<dbReference type="GO" id="GO:0072686">
    <property type="term" value="C:mitotic spindle"/>
    <property type="evidence" value="ECO:0000314"/>
    <property type="project" value="FlyBase"/>
</dbReference>
<dbReference type="GO" id="GO:0031594">
    <property type="term" value="C:neuromuscular junction"/>
    <property type="evidence" value="ECO:0000314"/>
    <property type="project" value="SynGO"/>
</dbReference>
<dbReference type="GO" id="GO:0005886">
    <property type="term" value="C:plasma membrane"/>
    <property type="evidence" value="ECO:0000314"/>
    <property type="project" value="FlyBase"/>
</dbReference>
<dbReference type="GO" id="GO:0098793">
    <property type="term" value="C:presynapse"/>
    <property type="evidence" value="ECO:0007669"/>
    <property type="project" value="GOC"/>
</dbReference>
<dbReference type="GO" id="GO:0070864">
    <property type="term" value="C:sperm individualization complex"/>
    <property type="evidence" value="ECO:0000314"/>
    <property type="project" value="FlyBase"/>
</dbReference>
<dbReference type="GO" id="GO:0045202">
    <property type="term" value="C:synapse"/>
    <property type="evidence" value="ECO:0000315"/>
    <property type="project" value="FlyBase"/>
</dbReference>
<dbReference type="GO" id="GO:0003779">
    <property type="term" value="F:actin binding"/>
    <property type="evidence" value="ECO:0000314"/>
    <property type="project" value="FlyBase"/>
</dbReference>
<dbReference type="GO" id="GO:0005525">
    <property type="term" value="F:GTP binding"/>
    <property type="evidence" value="ECO:0007669"/>
    <property type="project" value="UniProtKB-KW"/>
</dbReference>
<dbReference type="GO" id="GO:0003924">
    <property type="term" value="F:GTPase activity"/>
    <property type="evidence" value="ECO:0000318"/>
    <property type="project" value="GO_Central"/>
</dbReference>
<dbReference type="GO" id="GO:0008017">
    <property type="term" value="F:microtubule binding"/>
    <property type="evidence" value="ECO:0000314"/>
    <property type="project" value="FlyBase"/>
</dbReference>
<dbReference type="GO" id="GO:0034334">
    <property type="term" value="P:adherens junction maintenance"/>
    <property type="evidence" value="ECO:0000315"/>
    <property type="project" value="FlyBase"/>
</dbReference>
<dbReference type="GO" id="GO:0007298">
    <property type="term" value="P:border follicle cell migration"/>
    <property type="evidence" value="ECO:0000315"/>
    <property type="project" value="FlyBase"/>
</dbReference>
<dbReference type="GO" id="GO:0150008">
    <property type="term" value="P:bulk synaptic vesicle endocytosis"/>
    <property type="evidence" value="ECO:0000315"/>
    <property type="project" value="FlyBase"/>
</dbReference>
<dbReference type="GO" id="GO:0007349">
    <property type="term" value="P:cellularization"/>
    <property type="evidence" value="ECO:0000315"/>
    <property type="project" value="FlyBase"/>
</dbReference>
<dbReference type="GO" id="GO:0007268">
    <property type="term" value="P:chemical synaptic transmission"/>
    <property type="evidence" value="ECO:0000315"/>
    <property type="project" value="FlyBase"/>
</dbReference>
<dbReference type="GO" id="GO:0072583">
    <property type="term" value="P:clathrin-dependent endocytosis"/>
    <property type="evidence" value="ECO:0000315"/>
    <property type="project" value="FlyBase"/>
</dbReference>
<dbReference type="GO" id="GO:0061883">
    <property type="term" value="P:clathrin-dependent endocytosis involved in vitellogenesis"/>
    <property type="evidence" value="ECO:0000315"/>
    <property type="project" value="FlyBase"/>
</dbReference>
<dbReference type="GO" id="GO:0150007">
    <property type="term" value="P:clathrin-dependent synaptic vesicle endocytosis"/>
    <property type="evidence" value="ECO:0000315"/>
    <property type="project" value="FlyBase"/>
</dbReference>
<dbReference type="GO" id="GO:0046667">
    <property type="term" value="P:compound eye retinal cell programmed cell death"/>
    <property type="evidence" value="ECO:0000315"/>
    <property type="project" value="FlyBase"/>
</dbReference>
<dbReference type="GO" id="GO:0001661">
    <property type="term" value="P:conditioned taste aversion"/>
    <property type="evidence" value="ECO:0000315"/>
    <property type="project" value="FlyBase"/>
</dbReference>
<dbReference type="GO" id="GO:0030866">
    <property type="term" value="P:cortical actin cytoskeleton organization"/>
    <property type="evidence" value="ECO:0000315"/>
    <property type="project" value="FlyBase"/>
</dbReference>
<dbReference type="GO" id="GO:0046843">
    <property type="term" value="P:dorsal appendage formation"/>
    <property type="evidence" value="ECO:0000315"/>
    <property type="project" value="FlyBase"/>
</dbReference>
<dbReference type="GO" id="GO:0006897">
    <property type="term" value="P:endocytosis"/>
    <property type="evidence" value="ECO:0000314"/>
    <property type="project" value="FlyBase"/>
</dbReference>
<dbReference type="GO" id="GO:0007427">
    <property type="term" value="P:epithelial cell migration, open tracheal system"/>
    <property type="evidence" value="ECO:0000315"/>
    <property type="project" value="FlyBase"/>
</dbReference>
<dbReference type="GO" id="GO:0030198">
    <property type="term" value="P:extracellular matrix organization"/>
    <property type="evidence" value="ECO:0000315"/>
    <property type="project" value="FlyBase"/>
</dbReference>
<dbReference type="GO" id="GO:0030707">
    <property type="term" value="P:follicle cell of egg chamber development"/>
    <property type="evidence" value="ECO:0000315"/>
    <property type="project" value="FlyBase"/>
</dbReference>
<dbReference type="GO" id="GO:0030536">
    <property type="term" value="P:larval feeding behavior"/>
    <property type="evidence" value="ECO:0000315"/>
    <property type="project" value="FlyBase"/>
</dbReference>
<dbReference type="GO" id="GO:0007612">
    <property type="term" value="P:learning"/>
    <property type="evidence" value="ECO:0000315"/>
    <property type="project" value="FlyBase"/>
</dbReference>
<dbReference type="GO" id="GO:0090148">
    <property type="term" value="P:membrane fission"/>
    <property type="evidence" value="ECO:0000315"/>
    <property type="project" value="FlyBase"/>
</dbReference>
<dbReference type="GO" id="GO:0007613">
    <property type="term" value="P:memory"/>
    <property type="evidence" value="ECO:0000315"/>
    <property type="project" value="FlyBase"/>
</dbReference>
<dbReference type="GO" id="GO:1903475">
    <property type="term" value="P:mitotic actomyosin contractile ring assembly"/>
    <property type="evidence" value="ECO:0000315"/>
    <property type="project" value="FlyBase"/>
</dbReference>
<dbReference type="GO" id="GO:0001738">
    <property type="term" value="P:morphogenesis of a polarized epithelium"/>
    <property type="evidence" value="ECO:0000315"/>
    <property type="project" value="FlyBase"/>
</dbReference>
<dbReference type="GO" id="GO:0001933">
    <property type="term" value="P:negative regulation of protein phosphorylation"/>
    <property type="evidence" value="ECO:0000315"/>
    <property type="project" value="UniProtKB"/>
</dbReference>
<dbReference type="GO" id="GO:0008355">
    <property type="term" value="P:olfactory learning"/>
    <property type="evidence" value="ECO:0000314"/>
    <property type="project" value="FlyBase"/>
</dbReference>
<dbReference type="GO" id="GO:0007424">
    <property type="term" value="P:open tracheal system development"/>
    <property type="evidence" value="ECO:0000315"/>
    <property type="project" value="FlyBase"/>
</dbReference>
<dbReference type="GO" id="GO:0030838">
    <property type="term" value="P:positive regulation of actin filament polymerization"/>
    <property type="evidence" value="ECO:0000315"/>
    <property type="project" value="UniProtKB"/>
</dbReference>
<dbReference type="GO" id="GO:0010508">
    <property type="term" value="P:positive regulation of autophagy"/>
    <property type="evidence" value="ECO:0000315"/>
    <property type="project" value="FlyBase"/>
</dbReference>
<dbReference type="GO" id="GO:0099525">
    <property type="term" value="P:presynaptic dense core vesicle exocytosis"/>
    <property type="evidence" value="ECO:0000314"/>
    <property type="project" value="SynGO"/>
</dbReference>
<dbReference type="GO" id="GO:0007637">
    <property type="term" value="P:proboscis extension reflex"/>
    <property type="evidence" value="ECO:0000315"/>
    <property type="project" value="FlyBase"/>
</dbReference>
<dbReference type="GO" id="GO:0072659">
    <property type="term" value="P:protein localization to plasma membrane"/>
    <property type="evidence" value="ECO:0000315"/>
    <property type="project" value="FlyBase"/>
</dbReference>
<dbReference type="GO" id="GO:0031623">
    <property type="term" value="P:receptor internalization"/>
    <property type="evidence" value="ECO:0000318"/>
    <property type="project" value="GO_Central"/>
</dbReference>
<dbReference type="GO" id="GO:0032956">
    <property type="term" value="P:regulation of actin cytoskeleton organization"/>
    <property type="evidence" value="ECO:0000316"/>
    <property type="project" value="FlyBase"/>
</dbReference>
<dbReference type="GO" id="GO:0032970">
    <property type="term" value="P:regulation of actin filament-based process"/>
    <property type="evidence" value="ECO:0000316"/>
    <property type="project" value="FlyBase"/>
</dbReference>
<dbReference type="GO" id="GO:0040008">
    <property type="term" value="P:regulation of growth"/>
    <property type="evidence" value="ECO:0000315"/>
    <property type="project" value="FlyBase"/>
</dbReference>
<dbReference type="GO" id="GO:0048172">
    <property type="term" value="P:regulation of short-term neuronal synaptic plasticity"/>
    <property type="evidence" value="ECO:0000315"/>
    <property type="project" value="FlyBase"/>
</dbReference>
<dbReference type="GO" id="GO:0050803">
    <property type="term" value="P:regulation of synapse structure or activity"/>
    <property type="evidence" value="ECO:0000315"/>
    <property type="project" value="FlyBase"/>
</dbReference>
<dbReference type="GO" id="GO:0035152">
    <property type="term" value="P:regulation of tube architecture, open tracheal system"/>
    <property type="evidence" value="ECO:0000315"/>
    <property type="project" value="FlyBase"/>
</dbReference>
<dbReference type="GO" id="GO:0007435">
    <property type="term" value="P:salivary gland morphogenesis"/>
    <property type="evidence" value="ECO:0000315"/>
    <property type="project" value="FlyBase"/>
</dbReference>
<dbReference type="GO" id="GO:0007614">
    <property type="term" value="P:short-term memory"/>
    <property type="evidence" value="ECO:0000315"/>
    <property type="project" value="FlyBase"/>
</dbReference>
<dbReference type="GO" id="GO:0007291">
    <property type="term" value="P:sperm individualization"/>
    <property type="evidence" value="ECO:0000315"/>
    <property type="project" value="FlyBase"/>
</dbReference>
<dbReference type="GO" id="GO:0046718">
    <property type="term" value="P:symbiont entry into host cell"/>
    <property type="evidence" value="ECO:0007001"/>
    <property type="project" value="FlyBase"/>
</dbReference>
<dbReference type="GO" id="GO:0016185">
    <property type="term" value="P:synaptic vesicle budding from presynaptic endocytic zone membrane"/>
    <property type="evidence" value="ECO:0000315"/>
    <property type="project" value="FlyBase"/>
</dbReference>
<dbReference type="GO" id="GO:0048488">
    <property type="term" value="P:synaptic vesicle endocytosis"/>
    <property type="evidence" value="ECO:0000314"/>
    <property type="project" value="FlyBase"/>
</dbReference>
<dbReference type="GO" id="GO:0048499">
    <property type="term" value="P:synaptic vesicle membrane organization"/>
    <property type="evidence" value="ECO:0000315"/>
    <property type="project" value="FlyBase"/>
</dbReference>
<dbReference type="GO" id="GO:0036465">
    <property type="term" value="P:synaptic vesicle recycling"/>
    <property type="evidence" value="ECO:0000315"/>
    <property type="project" value="FlyBase"/>
</dbReference>
<dbReference type="GO" id="GO:0048489">
    <property type="term" value="P:synaptic vesicle transport"/>
    <property type="evidence" value="ECO:0000314"/>
    <property type="project" value="FlyBase"/>
</dbReference>
<dbReference type="GO" id="GO:0035186">
    <property type="term" value="P:syncytial blastoderm mitotic cell cycle"/>
    <property type="evidence" value="ECO:0000315"/>
    <property type="project" value="FlyBase"/>
</dbReference>
<dbReference type="CDD" id="cd08771">
    <property type="entry name" value="DLP_1"/>
    <property type="match status" value="1"/>
</dbReference>
<dbReference type="CDD" id="cd01256">
    <property type="entry name" value="PH_dynamin"/>
    <property type="match status" value="1"/>
</dbReference>
<dbReference type="FunFam" id="2.30.29.30:FF:000370">
    <property type="entry name" value="Dynamin, putative"/>
    <property type="match status" value="1"/>
</dbReference>
<dbReference type="FunFam" id="3.40.50.300:FF:000045">
    <property type="entry name" value="dynamin-1 isoform X2"/>
    <property type="match status" value="1"/>
</dbReference>
<dbReference type="FunFam" id="1.20.120.1240:FF:000008">
    <property type="entry name" value="dynamin-3 isoform X1"/>
    <property type="match status" value="1"/>
</dbReference>
<dbReference type="Gene3D" id="1.20.120.1240">
    <property type="entry name" value="Dynamin, middle domain"/>
    <property type="match status" value="1"/>
</dbReference>
<dbReference type="Gene3D" id="3.40.50.300">
    <property type="entry name" value="P-loop containing nucleotide triphosphate hydrolases"/>
    <property type="match status" value="1"/>
</dbReference>
<dbReference type="Gene3D" id="2.30.29.30">
    <property type="entry name" value="Pleckstrin-homology domain (PH domain)/Phosphotyrosine-binding domain (PTB)"/>
    <property type="match status" value="1"/>
</dbReference>
<dbReference type="InterPro" id="IPR022812">
    <property type="entry name" value="Dynamin"/>
</dbReference>
<dbReference type="InterPro" id="IPR001401">
    <property type="entry name" value="Dynamin_GTPase"/>
</dbReference>
<dbReference type="InterPro" id="IPR019762">
    <property type="entry name" value="Dynamin_GTPase_CS"/>
</dbReference>
<dbReference type="InterPro" id="IPR045063">
    <property type="entry name" value="Dynamin_N"/>
</dbReference>
<dbReference type="InterPro" id="IPR000375">
    <property type="entry name" value="Dynamin_stalk"/>
</dbReference>
<dbReference type="InterPro" id="IPR030381">
    <property type="entry name" value="G_DYNAMIN_dom"/>
</dbReference>
<dbReference type="InterPro" id="IPR003130">
    <property type="entry name" value="GED"/>
</dbReference>
<dbReference type="InterPro" id="IPR020850">
    <property type="entry name" value="GED_dom"/>
</dbReference>
<dbReference type="InterPro" id="IPR027417">
    <property type="entry name" value="P-loop_NTPase"/>
</dbReference>
<dbReference type="InterPro" id="IPR011993">
    <property type="entry name" value="PH-like_dom_sf"/>
</dbReference>
<dbReference type="InterPro" id="IPR001849">
    <property type="entry name" value="PH_domain"/>
</dbReference>
<dbReference type="PANTHER" id="PTHR11566">
    <property type="entry name" value="DYNAMIN"/>
    <property type="match status" value="1"/>
</dbReference>
<dbReference type="PANTHER" id="PTHR11566:SF212">
    <property type="entry name" value="DYNAMIN"/>
    <property type="match status" value="1"/>
</dbReference>
<dbReference type="Pfam" id="PF01031">
    <property type="entry name" value="Dynamin_M"/>
    <property type="match status" value="1"/>
</dbReference>
<dbReference type="Pfam" id="PF00350">
    <property type="entry name" value="Dynamin_N"/>
    <property type="match status" value="1"/>
</dbReference>
<dbReference type="Pfam" id="PF02212">
    <property type="entry name" value="GED"/>
    <property type="match status" value="1"/>
</dbReference>
<dbReference type="Pfam" id="PF00169">
    <property type="entry name" value="PH"/>
    <property type="match status" value="1"/>
</dbReference>
<dbReference type="PRINTS" id="PR00195">
    <property type="entry name" value="DYNAMIN"/>
</dbReference>
<dbReference type="SMART" id="SM00053">
    <property type="entry name" value="DYNc"/>
    <property type="match status" value="1"/>
</dbReference>
<dbReference type="SMART" id="SM00302">
    <property type="entry name" value="GED"/>
    <property type="match status" value="1"/>
</dbReference>
<dbReference type="SMART" id="SM00233">
    <property type="entry name" value="PH"/>
    <property type="match status" value="1"/>
</dbReference>
<dbReference type="SUPFAM" id="SSF52540">
    <property type="entry name" value="P-loop containing nucleoside triphosphate hydrolases"/>
    <property type="match status" value="1"/>
</dbReference>
<dbReference type="SUPFAM" id="SSF50729">
    <property type="entry name" value="PH domain-like"/>
    <property type="match status" value="1"/>
</dbReference>
<dbReference type="PROSITE" id="PS00410">
    <property type="entry name" value="G_DYNAMIN_1"/>
    <property type="match status" value="1"/>
</dbReference>
<dbReference type="PROSITE" id="PS51718">
    <property type="entry name" value="G_DYNAMIN_2"/>
    <property type="match status" value="1"/>
</dbReference>
<dbReference type="PROSITE" id="PS51388">
    <property type="entry name" value="GED"/>
    <property type="match status" value="1"/>
</dbReference>
<dbReference type="PROSITE" id="PS50003">
    <property type="entry name" value="PH_DOMAIN"/>
    <property type="match status" value="1"/>
</dbReference>
<evidence type="ECO:0000250" key="1">
    <source>
        <dbReference type="UniProtKB" id="O00429"/>
    </source>
</evidence>
<evidence type="ECO:0000255" key="2">
    <source>
        <dbReference type="PROSITE-ProRule" id="PRU00145"/>
    </source>
</evidence>
<evidence type="ECO:0000255" key="3">
    <source>
        <dbReference type="PROSITE-ProRule" id="PRU00720"/>
    </source>
</evidence>
<evidence type="ECO:0000255" key="4">
    <source>
        <dbReference type="PROSITE-ProRule" id="PRU01055"/>
    </source>
</evidence>
<evidence type="ECO:0000256" key="5">
    <source>
        <dbReference type="SAM" id="MobiDB-lite"/>
    </source>
</evidence>
<evidence type="ECO:0000269" key="6">
    <source>
    </source>
</evidence>
<evidence type="ECO:0000269" key="7">
    <source>
    </source>
</evidence>
<evidence type="ECO:0000303" key="8">
    <source>
    </source>
</evidence>
<evidence type="ECO:0000303" key="9">
    <source>
    </source>
</evidence>
<evidence type="ECO:0000305" key="10"/>
<gene>
    <name type="primary">shi</name>
    <name type="ORF">CG18102</name>
</gene>
<sequence>MDSLITIVNKLQDAFTSLGVHMQLDLPQIAVVGGQSAGKSSVLENFVGKDFLPRGSGIVTRRPLILQLINGVTEYGEFLHIKGKKFSSFDEIRKEIEDETDRVTGSNKGISNIPINLRVYSPHVLNLTLIDLPGLTKVAIGDQPVDIEQQIKQMIFQFIRKETCLILAVTPANTDLANSDALKLAKEVDPQGVRTIGVITKLDLMDEGTDARDILENKLLPLRRGYIGVVNRSQKDIEGRKDIHQALAAERKFFLSHPSYRHMADRLGTPYLQRVLNQQLTNHIRDTLPGLRDKLQKQMLTLEKEVEEFKHFQPGDASIKTKAMLQMIQQLQSDFERTIEGSGSALVNTNELSGGAKINRIFHERLRFEIVKMACDEKELRREISFAIRNIHGIRVGLFTPDMAFEAIVKRQIALLKEPVIKCVDLVVQELSVVVRMCTAKMSRYPRLREETERIITTHVRQREHSCKEQILLLIDFELAYMNTNHEDFIGFANAQNKSENANKTGTRQLGNQVIRKGHMVIQNLGIMKGGSRPYWFVLTSESISWYKDEDEKEKKFMLPLDGLKLRDIEQGFMSMSRRVTFALFSPDGRNVYKDYKQLELSCETVEDVESWKASFLRAGVYPEKQETQENGDESASEESSSDPQLERQVETIRNLVDSYMKIVTKTTRDMVPKAIMMLIINNAKDFINGELLAHLYASGDQAQMMEESAESATRREEMLRMYRACKDALQIIGDVSMATVSSPLPPPVKNDWLPSGLDNPRLSPPSPGGVRGKPGPPAQSSLGGRNPPLPPSTGRPAPAIPNRPGGGAPPLPGGRPGGSLPPPMLPSRVSGAVGGAIVQQSGANRYVPESMRGQVNQAVGQAAINELSNAFSSRFK</sequence>